<feature type="chain" id="PRO_1000199841" description="Urease subunit gamma">
    <location>
        <begin position="1"/>
        <end position="100"/>
    </location>
</feature>
<comment type="catalytic activity">
    <reaction evidence="1">
        <text>urea + 2 H2O + H(+) = hydrogencarbonate + 2 NH4(+)</text>
        <dbReference type="Rhea" id="RHEA:20557"/>
        <dbReference type="ChEBI" id="CHEBI:15377"/>
        <dbReference type="ChEBI" id="CHEBI:15378"/>
        <dbReference type="ChEBI" id="CHEBI:16199"/>
        <dbReference type="ChEBI" id="CHEBI:17544"/>
        <dbReference type="ChEBI" id="CHEBI:28938"/>
        <dbReference type="EC" id="3.5.1.5"/>
    </reaction>
</comment>
<comment type="pathway">
    <text evidence="1">Nitrogen metabolism; urea degradation; CO(2) and NH(3) from urea (urease route): step 1/1.</text>
</comment>
<comment type="subunit">
    <text evidence="1">Heterotrimer of UreA (gamma), UreB (beta) and UreC (alpha) subunits. Three heterotrimers associate to form the active enzyme.</text>
</comment>
<comment type="subcellular location">
    <subcellularLocation>
        <location evidence="1">Cytoplasm</location>
    </subcellularLocation>
</comment>
<comment type="similarity">
    <text evidence="1">Belongs to the urease gamma subunit family.</text>
</comment>
<organism>
    <name type="scientific">Acinetobacter baumannii (strain AB307-0294)</name>
    <dbReference type="NCBI Taxonomy" id="557600"/>
    <lineage>
        <taxon>Bacteria</taxon>
        <taxon>Pseudomonadati</taxon>
        <taxon>Pseudomonadota</taxon>
        <taxon>Gammaproteobacteria</taxon>
        <taxon>Moraxellales</taxon>
        <taxon>Moraxellaceae</taxon>
        <taxon>Acinetobacter</taxon>
        <taxon>Acinetobacter calcoaceticus/baumannii complex</taxon>
    </lineage>
</organism>
<dbReference type="EC" id="3.5.1.5" evidence="1"/>
<dbReference type="EMBL" id="CP001172">
    <property type="protein sequence ID" value="ACJ56448.1"/>
    <property type="molecule type" value="Genomic_DNA"/>
</dbReference>
<dbReference type="RefSeq" id="WP_000422460.1">
    <property type="nucleotide sequence ID" value="NZ_CP001172.1"/>
</dbReference>
<dbReference type="SMR" id="B7GXU5"/>
<dbReference type="GeneID" id="92892975"/>
<dbReference type="HOGENOM" id="CLU_145825_1_0_6"/>
<dbReference type="UniPathway" id="UPA00258">
    <property type="reaction ID" value="UER00370"/>
</dbReference>
<dbReference type="Proteomes" id="UP000006924">
    <property type="component" value="Chromosome"/>
</dbReference>
<dbReference type="GO" id="GO:0005737">
    <property type="term" value="C:cytoplasm"/>
    <property type="evidence" value="ECO:0007669"/>
    <property type="project" value="UniProtKB-SubCell"/>
</dbReference>
<dbReference type="GO" id="GO:0016151">
    <property type="term" value="F:nickel cation binding"/>
    <property type="evidence" value="ECO:0007669"/>
    <property type="project" value="InterPro"/>
</dbReference>
<dbReference type="GO" id="GO:0009039">
    <property type="term" value="F:urease activity"/>
    <property type="evidence" value="ECO:0007669"/>
    <property type="project" value="UniProtKB-UniRule"/>
</dbReference>
<dbReference type="GO" id="GO:0043419">
    <property type="term" value="P:urea catabolic process"/>
    <property type="evidence" value="ECO:0007669"/>
    <property type="project" value="UniProtKB-UniRule"/>
</dbReference>
<dbReference type="CDD" id="cd00390">
    <property type="entry name" value="Urease_gamma"/>
    <property type="match status" value="1"/>
</dbReference>
<dbReference type="Gene3D" id="3.30.280.10">
    <property type="entry name" value="Urease, gamma-like subunit"/>
    <property type="match status" value="1"/>
</dbReference>
<dbReference type="HAMAP" id="MF_00739">
    <property type="entry name" value="Urease_gamma"/>
    <property type="match status" value="1"/>
</dbReference>
<dbReference type="InterPro" id="IPR012010">
    <property type="entry name" value="Urease_gamma"/>
</dbReference>
<dbReference type="InterPro" id="IPR002026">
    <property type="entry name" value="Urease_gamma/gamma-beta_su"/>
</dbReference>
<dbReference type="InterPro" id="IPR036463">
    <property type="entry name" value="Urease_gamma_sf"/>
</dbReference>
<dbReference type="InterPro" id="IPR050069">
    <property type="entry name" value="Urease_subunit"/>
</dbReference>
<dbReference type="NCBIfam" id="NF009712">
    <property type="entry name" value="PRK13241.1"/>
    <property type="match status" value="1"/>
</dbReference>
<dbReference type="NCBIfam" id="TIGR00193">
    <property type="entry name" value="urease_gam"/>
    <property type="match status" value="1"/>
</dbReference>
<dbReference type="PANTHER" id="PTHR33569">
    <property type="entry name" value="UREASE"/>
    <property type="match status" value="1"/>
</dbReference>
<dbReference type="PANTHER" id="PTHR33569:SF1">
    <property type="entry name" value="UREASE"/>
    <property type="match status" value="1"/>
</dbReference>
<dbReference type="Pfam" id="PF00547">
    <property type="entry name" value="Urease_gamma"/>
    <property type="match status" value="1"/>
</dbReference>
<dbReference type="PIRSF" id="PIRSF001223">
    <property type="entry name" value="Urease_gamma"/>
    <property type="match status" value="1"/>
</dbReference>
<dbReference type="SUPFAM" id="SSF54111">
    <property type="entry name" value="Urease, gamma-subunit"/>
    <property type="match status" value="1"/>
</dbReference>
<protein>
    <recommendedName>
        <fullName evidence="1">Urease subunit gamma</fullName>
        <ecNumber evidence="1">3.5.1.5</ecNumber>
    </recommendedName>
    <alternativeName>
        <fullName evidence="1">Urea amidohydrolase subunit gamma</fullName>
    </alternativeName>
</protein>
<name>URE3_ACIB3</name>
<evidence type="ECO:0000255" key="1">
    <source>
        <dbReference type="HAMAP-Rule" id="MF_00739"/>
    </source>
</evidence>
<keyword id="KW-0963">Cytoplasm</keyword>
<keyword id="KW-0378">Hydrolase</keyword>
<gene>
    <name evidence="1" type="primary">ureA</name>
    <name type="ordered locus">ABBFA_002597</name>
</gene>
<accession>B7GXU5</accession>
<proteinExistence type="inferred from homology"/>
<sequence length="100" mass="10968">MELNPTEKDKLLIFTAGLVAERRKARGLKLNYPEAVAFISAALLEGARDGMTVSELMHFGTTLLKREDVMDGVPEMIAEVQVEATFPDGSKLVTVHQPIV</sequence>
<reference key="1">
    <citation type="journal article" date="2008" name="J. Bacteriol.">
        <title>Comparative genome sequence analysis of multidrug-resistant Acinetobacter baumannii.</title>
        <authorList>
            <person name="Adams M.D."/>
            <person name="Goglin K."/>
            <person name="Molyneaux N."/>
            <person name="Hujer K.M."/>
            <person name="Lavender H."/>
            <person name="Jamison J.J."/>
            <person name="MacDonald I.J."/>
            <person name="Martin K.M."/>
            <person name="Russo T."/>
            <person name="Campagnari A.A."/>
            <person name="Hujer A.M."/>
            <person name="Bonomo R.A."/>
            <person name="Gill S.R."/>
        </authorList>
    </citation>
    <scope>NUCLEOTIDE SEQUENCE [LARGE SCALE GENOMIC DNA]</scope>
    <source>
        <strain>AB307-0294</strain>
    </source>
</reference>